<protein>
    <recommendedName>
        <fullName>BTB/POZ domain-containing protein KCTD15</fullName>
    </recommendedName>
    <alternativeName>
        <fullName>Potassium channel tetramerization domain-containing protein 15</fullName>
    </alternativeName>
</protein>
<organism>
    <name type="scientific">Mus musculus</name>
    <name type="common">Mouse</name>
    <dbReference type="NCBI Taxonomy" id="10090"/>
    <lineage>
        <taxon>Eukaryota</taxon>
        <taxon>Metazoa</taxon>
        <taxon>Chordata</taxon>
        <taxon>Craniata</taxon>
        <taxon>Vertebrata</taxon>
        <taxon>Euteleostomi</taxon>
        <taxon>Mammalia</taxon>
        <taxon>Eutheria</taxon>
        <taxon>Euarchontoglires</taxon>
        <taxon>Glires</taxon>
        <taxon>Rodentia</taxon>
        <taxon>Myomorpha</taxon>
        <taxon>Muroidea</taxon>
        <taxon>Muridae</taxon>
        <taxon>Murinae</taxon>
        <taxon>Mus</taxon>
        <taxon>Mus</taxon>
    </lineage>
</organism>
<keyword id="KW-0217">Developmental protein</keyword>
<keyword id="KW-0539">Nucleus</keyword>
<keyword id="KW-0597">Phosphoprotein</keyword>
<keyword id="KW-1185">Reference proteome</keyword>
<accession>Q8K0E1</accession>
<reference key="1">
    <citation type="journal article" date="2005" name="Science">
        <title>The transcriptional landscape of the mammalian genome.</title>
        <authorList>
            <person name="Carninci P."/>
            <person name="Kasukawa T."/>
            <person name="Katayama S."/>
            <person name="Gough J."/>
            <person name="Frith M.C."/>
            <person name="Maeda N."/>
            <person name="Oyama R."/>
            <person name="Ravasi T."/>
            <person name="Lenhard B."/>
            <person name="Wells C."/>
            <person name="Kodzius R."/>
            <person name="Shimokawa K."/>
            <person name="Bajic V.B."/>
            <person name="Brenner S.E."/>
            <person name="Batalov S."/>
            <person name="Forrest A.R."/>
            <person name="Zavolan M."/>
            <person name="Davis M.J."/>
            <person name="Wilming L.G."/>
            <person name="Aidinis V."/>
            <person name="Allen J.E."/>
            <person name="Ambesi-Impiombato A."/>
            <person name="Apweiler R."/>
            <person name="Aturaliya R.N."/>
            <person name="Bailey T.L."/>
            <person name="Bansal M."/>
            <person name="Baxter L."/>
            <person name="Beisel K.W."/>
            <person name="Bersano T."/>
            <person name="Bono H."/>
            <person name="Chalk A.M."/>
            <person name="Chiu K.P."/>
            <person name="Choudhary V."/>
            <person name="Christoffels A."/>
            <person name="Clutterbuck D.R."/>
            <person name="Crowe M.L."/>
            <person name="Dalla E."/>
            <person name="Dalrymple B.P."/>
            <person name="de Bono B."/>
            <person name="Della Gatta G."/>
            <person name="di Bernardo D."/>
            <person name="Down T."/>
            <person name="Engstrom P."/>
            <person name="Fagiolini M."/>
            <person name="Faulkner G."/>
            <person name="Fletcher C.F."/>
            <person name="Fukushima T."/>
            <person name="Furuno M."/>
            <person name="Futaki S."/>
            <person name="Gariboldi M."/>
            <person name="Georgii-Hemming P."/>
            <person name="Gingeras T.R."/>
            <person name="Gojobori T."/>
            <person name="Green R.E."/>
            <person name="Gustincich S."/>
            <person name="Harbers M."/>
            <person name="Hayashi Y."/>
            <person name="Hensch T.K."/>
            <person name="Hirokawa N."/>
            <person name="Hill D."/>
            <person name="Huminiecki L."/>
            <person name="Iacono M."/>
            <person name="Ikeo K."/>
            <person name="Iwama A."/>
            <person name="Ishikawa T."/>
            <person name="Jakt M."/>
            <person name="Kanapin A."/>
            <person name="Katoh M."/>
            <person name="Kawasawa Y."/>
            <person name="Kelso J."/>
            <person name="Kitamura H."/>
            <person name="Kitano H."/>
            <person name="Kollias G."/>
            <person name="Krishnan S.P."/>
            <person name="Kruger A."/>
            <person name="Kummerfeld S.K."/>
            <person name="Kurochkin I.V."/>
            <person name="Lareau L.F."/>
            <person name="Lazarevic D."/>
            <person name="Lipovich L."/>
            <person name="Liu J."/>
            <person name="Liuni S."/>
            <person name="McWilliam S."/>
            <person name="Madan Babu M."/>
            <person name="Madera M."/>
            <person name="Marchionni L."/>
            <person name="Matsuda H."/>
            <person name="Matsuzawa S."/>
            <person name="Miki H."/>
            <person name="Mignone F."/>
            <person name="Miyake S."/>
            <person name="Morris K."/>
            <person name="Mottagui-Tabar S."/>
            <person name="Mulder N."/>
            <person name="Nakano N."/>
            <person name="Nakauchi H."/>
            <person name="Ng P."/>
            <person name="Nilsson R."/>
            <person name="Nishiguchi S."/>
            <person name="Nishikawa S."/>
            <person name="Nori F."/>
            <person name="Ohara O."/>
            <person name="Okazaki Y."/>
            <person name="Orlando V."/>
            <person name="Pang K.C."/>
            <person name="Pavan W.J."/>
            <person name="Pavesi G."/>
            <person name="Pesole G."/>
            <person name="Petrovsky N."/>
            <person name="Piazza S."/>
            <person name="Reed J."/>
            <person name="Reid J.F."/>
            <person name="Ring B.Z."/>
            <person name="Ringwald M."/>
            <person name="Rost B."/>
            <person name="Ruan Y."/>
            <person name="Salzberg S.L."/>
            <person name="Sandelin A."/>
            <person name="Schneider C."/>
            <person name="Schoenbach C."/>
            <person name="Sekiguchi K."/>
            <person name="Semple C.A."/>
            <person name="Seno S."/>
            <person name="Sessa L."/>
            <person name="Sheng Y."/>
            <person name="Shibata Y."/>
            <person name="Shimada H."/>
            <person name="Shimada K."/>
            <person name="Silva D."/>
            <person name="Sinclair B."/>
            <person name="Sperling S."/>
            <person name="Stupka E."/>
            <person name="Sugiura K."/>
            <person name="Sultana R."/>
            <person name="Takenaka Y."/>
            <person name="Taki K."/>
            <person name="Tammoja K."/>
            <person name="Tan S.L."/>
            <person name="Tang S."/>
            <person name="Taylor M.S."/>
            <person name="Tegner J."/>
            <person name="Teichmann S.A."/>
            <person name="Ueda H.R."/>
            <person name="van Nimwegen E."/>
            <person name="Verardo R."/>
            <person name="Wei C.L."/>
            <person name="Yagi K."/>
            <person name="Yamanishi H."/>
            <person name="Zabarovsky E."/>
            <person name="Zhu S."/>
            <person name="Zimmer A."/>
            <person name="Hide W."/>
            <person name="Bult C."/>
            <person name="Grimmond S.M."/>
            <person name="Teasdale R.D."/>
            <person name="Liu E.T."/>
            <person name="Brusic V."/>
            <person name="Quackenbush J."/>
            <person name="Wahlestedt C."/>
            <person name="Mattick J.S."/>
            <person name="Hume D.A."/>
            <person name="Kai C."/>
            <person name="Sasaki D."/>
            <person name="Tomaru Y."/>
            <person name="Fukuda S."/>
            <person name="Kanamori-Katayama M."/>
            <person name="Suzuki M."/>
            <person name="Aoki J."/>
            <person name="Arakawa T."/>
            <person name="Iida J."/>
            <person name="Imamura K."/>
            <person name="Itoh M."/>
            <person name="Kato T."/>
            <person name="Kawaji H."/>
            <person name="Kawagashira N."/>
            <person name="Kawashima T."/>
            <person name="Kojima M."/>
            <person name="Kondo S."/>
            <person name="Konno H."/>
            <person name="Nakano K."/>
            <person name="Ninomiya N."/>
            <person name="Nishio T."/>
            <person name="Okada M."/>
            <person name="Plessy C."/>
            <person name="Shibata K."/>
            <person name="Shiraki T."/>
            <person name="Suzuki S."/>
            <person name="Tagami M."/>
            <person name="Waki K."/>
            <person name="Watahiki A."/>
            <person name="Okamura-Oho Y."/>
            <person name="Suzuki H."/>
            <person name="Kawai J."/>
            <person name="Hayashizaki Y."/>
        </authorList>
    </citation>
    <scope>NUCLEOTIDE SEQUENCE [LARGE SCALE MRNA]</scope>
    <source>
        <strain>C57BL/6J</strain>
        <tissue>Embryonic breast</tissue>
    </source>
</reference>
<reference key="2">
    <citation type="journal article" date="2004" name="Genome Res.">
        <title>The status, quality, and expansion of the NIH full-length cDNA project: the Mammalian Gene Collection (MGC).</title>
        <authorList>
            <consortium name="The MGC Project Team"/>
        </authorList>
    </citation>
    <scope>NUCLEOTIDE SEQUENCE [LARGE SCALE MRNA]</scope>
    <source>
        <tissue>Eye</tissue>
    </source>
</reference>
<reference key="3">
    <citation type="journal article" date="2004" name="Mol. Cell. Proteomics">
        <title>Phosphoproteomic analysis of the developing mouse brain.</title>
        <authorList>
            <person name="Ballif B.A."/>
            <person name="Villen J."/>
            <person name="Beausoleil S.A."/>
            <person name="Schwartz D."/>
            <person name="Gygi S.P."/>
        </authorList>
    </citation>
    <scope>PHOSPHORYLATION [LARGE SCALE ANALYSIS] AT SER-35</scope>
    <scope>IDENTIFICATION BY MASS SPECTROMETRY [LARGE SCALE ANALYSIS]</scope>
    <source>
        <tissue>Embryonic brain</tissue>
    </source>
</reference>
<reference key="4">
    <citation type="journal article" date="2010" name="Cell">
        <title>A tissue-specific atlas of mouse protein phosphorylation and expression.</title>
        <authorList>
            <person name="Huttlin E.L."/>
            <person name="Jedrychowski M.P."/>
            <person name="Elias J.E."/>
            <person name="Goswami T."/>
            <person name="Rad R."/>
            <person name="Beausoleil S.A."/>
            <person name="Villen J."/>
            <person name="Haas W."/>
            <person name="Sowa M.E."/>
            <person name="Gygi S.P."/>
        </authorList>
    </citation>
    <scope>PHOSPHORYLATION [LARGE SCALE ANALYSIS] AT SER-35 AND SER-38</scope>
    <scope>IDENTIFICATION BY MASS SPECTROMETRY [LARGE SCALE ANALYSIS]</scope>
    <source>
        <tissue>Kidney</tissue>
    </source>
</reference>
<reference key="5">
    <citation type="journal article" date="2014" name="PLoS Genet.">
        <title>Obesity-linked homologues TfAP-2 and Twz establish meal frequency in Drosophila melanogaster.</title>
        <authorList>
            <person name="Williams M.J."/>
            <person name="Goergen P."/>
            <person name="Rajendran J."/>
            <person name="Zheleznyakova G."/>
            <person name="Haegglund M.G."/>
            <person name="Perland E."/>
            <person name="Bagchi S."/>
            <person name="Kalogeropoulou A."/>
            <person name="Khan Z."/>
            <person name="Fredriksson R."/>
            <person name="Schioeth H.B."/>
        </authorList>
    </citation>
    <scope>SUBCELLULAR LOCATION</scope>
    <scope>TISSUE SPECIFICITY</scope>
</reference>
<reference key="6">
    <citation type="journal article" date="2023" name="J. Clin. Invest.">
        <title>KCTD1/KCTD15 complexes control ectodermal and neural crest cell functions, and their impairment causes aplasia cutis.</title>
        <authorList>
            <person name="Raymundo J.R."/>
            <person name="Zhang H."/>
            <person name="Smaldone G."/>
            <person name="Zhu W."/>
            <person name="Daly K.E."/>
            <person name="Glennon B.J."/>
            <person name="Pecoraro G."/>
            <person name="Salvatore M."/>
            <person name="Devine W.A."/>
            <person name="Lo C.W."/>
            <person name="Vitagliano L."/>
            <person name="Marneros A.G."/>
        </authorList>
    </citation>
    <scope>DISRUPTION PHENOTYPE</scope>
</reference>
<comment type="function">
    <text evidence="1 2">During embryonic development, interferes with neural crest formation (By similarity). Inhibits AP2 transcriptional activity by interaction with its activation domain (By similarity).</text>
</comment>
<comment type="subunit">
    <text evidence="2">Forms oligomers, predominantly homopentamers. Interacts with KCTD1, probably forming heteropentamers depending on its abundance in a cell-type dependent manner. Interacts with TFAP2A; this interaction inhibits TFAP2A transcriptional activation.</text>
</comment>
<comment type="subcellular location">
    <subcellularLocation>
        <location evidence="4">Nucleus</location>
    </subcellularLocation>
</comment>
<comment type="tissue specificity">
    <text evidence="4">Expressed in the cerebral cortex, cerebellum, and hypothalamus (at protein level). Expressed in the arcuate hypothalamic nucleus, the ventromedial hypothalamic nucleus and the accumbens nucleus of the ventral striatum.</text>
</comment>
<comment type="disruption phenotype">
    <text evidence="5">Knockout animals show congenital subaortic perimembranous ventricular septal defects and bicuspid aortic valves.</text>
</comment>
<dbReference type="EMBL" id="AK034731">
    <property type="protein sequence ID" value="BAC28810.1"/>
    <property type="molecule type" value="mRNA"/>
</dbReference>
<dbReference type="EMBL" id="BC031749">
    <property type="protein sequence ID" value="AAH31749.1"/>
    <property type="molecule type" value="mRNA"/>
</dbReference>
<dbReference type="CCDS" id="CCDS21141.1"/>
<dbReference type="RefSeq" id="NP_001347747.1">
    <property type="nucleotide sequence ID" value="NM_001360818.2"/>
</dbReference>
<dbReference type="RefSeq" id="NP_001347749.1">
    <property type="nucleotide sequence ID" value="NM_001360820.2"/>
</dbReference>
<dbReference type="RefSeq" id="NP_001407787.1">
    <property type="nucleotide sequence ID" value="NM_001420858.1"/>
</dbReference>
<dbReference type="RefSeq" id="NP_001407788.1">
    <property type="nucleotide sequence ID" value="NM_001420859.1"/>
</dbReference>
<dbReference type="RefSeq" id="NP_001407789.1">
    <property type="nucleotide sequence ID" value="NM_001420860.1"/>
</dbReference>
<dbReference type="RefSeq" id="NP_666300.1">
    <property type="nucleotide sequence ID" value="NM_146188.2"/>
</dbReference>
<dbReference type="RefSeq" id="XP_006539963.1">
    <property type="nucleotide sequence ID" value="XM_006539900.1"/>
</dbReference>
<dbReference type="RefSeq" id="XP_006539964.1">
    <property type="nucleotide sequence ID" value="XM_006539901.5"/>
</dbReference>
<dbReference type="RefSeq" id="XP_006539965.1">
    <property type="nucleotide sequence ID" value="XM_006539902.3"/>
</dbReference>
<dbReference type="RefSeq" id="XP_006539966.1">
    <property type="nucleotide sequence ID" value="XM_006539903.3"/>
</dbReference>
<dbReference type="RefSeq" id="XP_006539967.1">
    <property type="nucleotide sequence ID" value="XM_006539904.5"/>
</dbReference>
<dbReference type="RefSeq" id="XP_006539968.1">
    <property type="nucleotide sequence ID" value="XM_006539905.3"/>
</dbReference>
<dbReference type="SMR" id="Q8K0E1"/>
<dbReference type="FunCoup" id="Q8K0E1">
    <property type="interactions" value="1681"/>
</dbReference>
<dbReference type="IntAct" id="Q8K0E1">
    <property type="interactions" value="1"/>
</dbReference>
<dbReference type="STRING" id="10090.ENSMUSP00000032709"/>
<dbReference type="GlyGen" id="Q8K0E1">
    <property type="glycosylation" value="2 sites, 1 N-linked glycan (1 site)"/>
</dbReference>
<dbReference type="iPTMnet" id="Q8K0E1"/>
<dbReference type="PhosphoSitePlus" id="Q8K0E1"/>
<dbReference type="PaxDb" id="10090-ENSMUSP00000103705"/>
<dbReference type="PeptideAtlas" id="Q8K0E1"/>
<dbReference type="ProteomicsDB" id="301758"/>
<dbReference type="Pumba" id="Q8K0E1"/>
<dbReference type="Antibodypedia" id="29083">
    <property type="antibodies" value="253 antibodies from 29 providers"/>
</dbReference>
<dbReference type="DNASU" id="233107"/>
<dbReference type="Ensembl" id="ENSMUST00000032709.3">
    <property type="protein sequence ID" value="ENSMUSP00000032709.2"/>
    <property type="gene ID" value="ENSMUSG00000030499.10"/>
</dbReference>
<dbReference type="Ensembl" id="ENSMUST00000108069.8">
    <property type="protein sequence ID" value="ENSMUSP00000103704.2"/>
    <property type="gene ID" value="ENSMUSG00000030499.10"/>
</dbReference>
<dbReference type="Ensembl" id="ENSMUST00000108070.9">
    <property type="protein sequence ID" value="ENSMUSP00000103705.3"/>
    <property type="gene ID" value="ENSMUSG00000030499.10"/>
</dbReference>
<dbReference type="GeneID" id="233107"/>
<dbReference type="KEGG" id="mmu:233107"/>
<dbReference type="UCSC" id="uc009gjf.2">
    <property type="organism name" value="mouse"/>
</dbReference>
<dbReference type="AGR" id="MGI:2385276"/>
<dbReference type="CTD" id="79047"/>
<dbReference type="MGI" id="MGI:2385276">
    <property type="gene designation" value="Kctd15"/>
</dbReference>
<dbReference type="VEuPathDB" id="HostDB:ENSMUSG00000030499"/>
<dbReference type="eggNOG" id="KOG2723">
    <property type="taxonomic scope" value="Eukaryota"/>
</dbReference>
<dbReference type="GeneTree" id="ENSGT00940000159496"/>
<dbReference type="HOGENOM" id="CLU_061268_1_0_1"/>
<dbReference type="InParanoid" id="Q8K0E1"/>
<dbReference type="OMA" id="FCDCIAV"/>
<dbReference type="OrthoDB" id="2414723at2759"/>
<dbReference type="PhylomeDB" id="Q8K0E1"/>
<dbReference type="TreeFam" id="TF315332"/>
<dbReference type="BioGRID-ORCS" id="233107">
    <property type="hits" value="1 hit in 77 CRISPR screens"/>
</dbReference>
<dbReference type="ChiTaRS" id="Kctd15">
    <property type="organism name" value="mouse"/>
</dbReference>
<dbReference type="PRO" id="PR:Q8K0E1"/>
<dbReference type="Proteomes" id="UP000000589">
    <property type="component" value="Chromosome 7"/>
</dbReference>
<dbReference type="RNAct" id="Q8K0E1">
    <property type="molecule type" value="protein"/>
</dbReference>
<dbReference type="Bgee" id="ENSMUSG00000030499">
    <property type="expression patterns" value="Expressed in ear vesicle and 218 other cell types or tissues"/>
</dbReference>
<dbReference type="ExpressionAtlas" id="Q8K0E1">
    <property type="expression patterns" value="baseline and differential"/>
</dbReference>
<dbReference type="GO" id="GO:0005634">
    <property type="term" value="C:nucleus"/>
    <property type="evidence" value="ECO:0000314"/>
    <property type="project" value="UniProtKB"/>
</dbReference>
<dbReference type="GO" id="GO:0042802">
    <property type="term" value="F:identical protein binding"/>
    <property type="evidence" value="ECO:0007669"/>
    <property type="project" value="Ensembl"/>
</dbReference>
<dbReference type="GO" id="GO:0051260">
    <property type="term" value="P:protein homooligomerization"/>
    <property type="evidence" value="ECO:0007669"/>
    <property type="project" value="InterPro"/>
</dbReference>
<dbReference type="CDD" id="cd18388">
    <property type="entry name" value="BTB_POZ_KCTD15"/>
    <property type="match status" value="1"/>
</dbReference>
<dbReference type="FunFam" id="3.30.710.10:FF:000003">
    <property type="entry name" value="BTB/POZ domain-containing protein KCTD6 isoform X2"/>
    <property type="match status" value="1"/>
</dbReference>
<dbReference type="Gene3D" id="3.30.710.10">
    <property type="entry name" value="Potassium Channel Kv1.1, Chain A"/>
    <property type="match status" value="1"/>
</dbReference>
<dbReference type="InterPro" id="IPR000210">
    <property type="entry name" value="BTB/POZ_dom"/>
</dbReference>
<dbReference type="InterPro" id="IPR048595">
    <property type="entry name" value="KCTD1-15-like_C"/>
</dbReference>
<dbReference type="InterPro" id="IPR045904">
    <property type="entry name" value="KCTD15_T1-type_BTB"/>
</dbReference>
<dbReference type="InterPro" id="IPR011333">
    <property type="entry name" value="SKP1/BTB/POZ_sf"/>
</dbReference>
<dbReference type="InterPro" id="IPR003131">
    <property type="entry name" value="T1-type_BTB"/>
</dbReference>
<dbReference type="PANTHER" id="PTHR14499:SF27">
    <property type="entry name" value="BTB_POZ DOMAIN-CONTAINING PROTEIN KCTD15"/>
    <property type="match status" value="1"/>
</dbReference>
<dbReference type="PANTHER" id="PTHR14499">
    <property type="entry name" value="POTASSIUM CHANNEL TETRAMERIZATION DOMAIN-CONTAINING"/>
    <property type="match status" value="1"/>
</dbReference>
<dbReference type="Pfam" id="PF02214">
    <property type="entry name" value="BTB_2"/>
    <property type="match status" value="1"/>
</dbReference>
<dbReference type="Pfam" id="PF20871">
    <property type="entry name" value="KCTD1-15_CTD"/>
    <property type="match status" value="1"/>
</dbReference>
<dbReference type="SMART" id="SM00225">
    <property type="entry name" value="BTB"/>
    <property type="match status" value="1"/>
</dbReference>
<dbReference type="SUPFAM" id="SSF54695">
    <property type="entry name" value="POZ domain"/>
    <property type="match status" value="1"/>
</dbReference>
<proteinExistence type="evidence at protein level"/>
<evidence type="ECO:0000250" key="1">
    <source>
        <dbReference type="UniProtKB" id="Q6DC02"/>
    </source>
</evidence>
<evidence type="ECO:0000250" key="2">
    <source>
        <dbReference type="UniProtKB" id="Q96SI1"/>
    </source>
</evidence>
<evidence type="ECO:0000256" key="3">
    <source>
        <dbReference type="SAM" id="MobiDB-lite"/>
    </source>
</evidence>
<evidence type="ECO:0000269" key="4">
    <source>
    </source>
</evidence>
<evidence type="ECO:0000269" key="5">
    <source>
    </source>
</evidence>
<evidence type="ECO:0007744" key="6">
    <source>
    </source>
</evidence>
<evidence type="ECO:0007744" key="7">
    <source>
    </source>
</evidence>
<sequence length="283" mass="31886">MPHRKERPSGSSLNAHGSSGTAEGGNMSRLSLTRSPVSPLAAQGIPLPAQLTKANAPVHIDVGGHMYTSSLATLTKYPDSRISRLFNGTEPIVLDSLKQHYFIDRDGEIFRYILSFLRTSKLLLPDDFKDFNLLYEEARYYQLQPMVRELERWQQDQEQRRRSRACDCLVVRVTPDLGERIALSGEKALIEEVFPETGDVMCNSVNAGWNQDPTHVIRFPLNGYCRLNSVQVLERLFQRGFSVAASCGGGVDSSQFSEYVLCREERRPQPTPTAVRIKQEPLD</sequence>
<gene>
    <name type="primary">Kctd15</name>
</gene>
<name>KCD15_MOUSE</name>
<feature type="chain" id="PRO_0000247252" description="BTB/POZ domain-containing protein KCTD15">
    <location>
        <begin position="1"/>
        <end position="283"/>
    </location>
</feature>
<feature type="domain" description="BTB">
    <location>
        <begin position="56"/>
        <end position="126"/>
    </location>
</feature>
<feature type="region of interest" description="Disordered" evidence="3">
    <location>
        <begin position="1"/>
        <end position="33"/>
    </location>
</feature>
<feature type="compositionally biased region" description="Polar residues" evidence="3">
    <location>
        <begin position="9"/>
        <end position="21"/>
    </location>
</feature>
<feature type="modified residue" description="Phosphoserine" evidence="2">
    <location>
        <position position="31"/>
    </location>
</feature>
<feature type="modified residue" description="Phosphoserine" evidence="6 7">
    <location>
        <position position="35"/>
    </location>
</feature>
<feature type="modified residue" description="Phosphoserine" evidence="7">
    <location>
        <position position="38"/>
    </location>
</feature>